<dbReference type="EC" id="4.6.1.12" evidence="1"/>
<dbReference type="EMBL" id="CP001322">
    <property type="protein sequence ID" value="ACL02473.1"/>
    <property type="molecule type" value="Genomic_DNA"/>
</dbReference>
<dbReference type="RefSeq" id="WP_012609912.1">
    <property type="nucleotide sequence ID" value="NC_011768.1"/>
</dbReference>
<dbReference type="SMR" id="B8FHQ6"/>
<dbReference type="KEGG" id="dal:Dalk_0768"/>
<dbReference type="eggNOG" id="COG0245">
    <property type="taxonomic scope" value="Bacteria"/>
</dbReference>
<dbReference type="HOGENOM" id="CLU_084630_2_0_7"/>
<dbReference type="UniPathway" id="UPA00056">
    <property type="reaction ID" value="UER00095"/>
</dbReference>
<dbReference type="Proteomes" id="UP000000739">
    <property type="component" value="Chromosome"/>
</dbReference>
<dbReference type="GO" id="GO:0008685">
    <property type="term" value="F:2-C-methyl-D-erythritol 2,4-cyclodiphosphate synthase activity"/>
    <property type="evidence" value="ECO:0007669"/>
    <property type="project" value="UniProtKB-UniRule"/>
</dbReference>
<dbReference type="GO" id="GO:0046872">
    <property type="term" value="F:metal ion binding"/>
    <property type="evidence" value="ECO:0007669"/>
    <property type="project" value="UniProtKB-KW"/>
</dbReference>
<dbReference type="GO" id="GO:0019288">
    <property type="term" value="P:isopentenyl diphosphate biosynthetic process, methylerythritol 4-phosphate pathway"/>
    <property type="evidence" value="ECO:0007669"/>
    <property type="project" value="UniProtKB-UniRule"/>
</dbReference>
<dbReference type="GO" id="GO:0016114">
    <property type="term" value="P:terpenoid biosynthetic process"/>
    <property type="evidence" value="ECO:0007669"/>
    <property type="project" value="InterPro"/>
</dbReference>
<dbReference type="CDD" id="cd00554">
    <property type="entry name" value="MECDP_synthase"/>
    <property type="match status" value="1"/>
</dbReference>
<dbReference type="FunFam" id="3.30.1330.50:FF:000001">
    <property type="entry name" value="2-C-methyl-D-erythritol 2,4-cyclodiphosphate synthase"/>
    <property type="match status" value="1"/>
</dbReference>
<dbReference type="Gene3D" id="3.30.1330.50">
    <property type="entry name" value="2-C-methyl-D-erythritol 2,4-cyclodiphosphate synthase"/>
    <property type="match status" value="1"/>
</dbReference>
<dbReference type="HAMAP" id="MF_00107">
    <property type="entry name" value="IspF"/>
    <property type="match status" value="1"/>
</dbReference>
<dbReference type="InterPro" id="IPR003526">
    <property type="entry name" value="MECDP_synthase"/>
</dbReference>
<dbReference type="InterPro" id="IPR020555">
    <property type="entry name" value="MECDP_synthase_CS"/>
</dbReference>
<dbReference type="InterPro" id="IPR036571">
    <property type="entry name" value="MECDP_synthase_sf"/>
</dbReference>
<dbReference type="NCBIfam" id="TIGR00151">
    <property type="entry name" value="ispF"/>
    <property type="match status" value="1"/>
</dbReference>
<dbReference type="PANTHER" id="PTHR43181">
    <property type="entry name" value="2-C-METHYL-D-ERYTHRITOL 2,4-CYCLODIPHOSPHATE SYNTHASE, CHLOROPLASTIC"/>
    <property type="match status" value="1"/>
</dbReference>
<dbReference type="PANTHER" id="PTHR43181:SF1">
    <property type="entry name" value="2-C-METHYL-D-ERYTHRITOL 2,4-CYCLODIPHOSPHATE SYNTHASE, CHLOROPLASTIC"/>
    <property type="match status" value="1"/>
</dbReference>
<dbReference type="Pfam" id="PF02542">
    <property type="entry name" value="YgbB"/>
    <property type="match status" value="1"/>
</dbReference>
<dbReference type="SUPFAM" id="SSF69765">
    <property type="entry name" value="IpsF-like"/>
    <property type="match status" value="1"/>
</dbReference>
<dbReference type="PROSITE" id="PS01350">
    <property type="entry name" value="ISPF"/>
    <property type="match status" value="1"/>
</dbReference>
<proteinExistence type="inferred from homology"/>
<sequence>MRVGYGYDVHRLVDGRPLVLGGVTIPFDKGLKGHSDADVLLHAVCDALLGAAGLGDIGMHFPDKDPKYKNIASTRLLEETGRKIAQEGYKIVNLDATLVAEAPKIGPYRQEMVSVIAKCLGLENRQVNVKATTTEGLGITGRGEGMAATCVACLE</sequence>
<gene>
    <name evidence="1" type="primary">ispF</name>
    <name type="ordered locus">Dalk_0768</name>
</gene>
<keyword id="KW-0414">Isoprene biosynthesis</keyword>
<keyword id="KW-0456">Lyase</keyword>
<keyword id="KW-0479">Metal-binding</keyword>
<keyword id="KW-1185">Reference proteome</keyword>
<reference key="1">
    <citation type="journal article" date="2012" name="Environ. Microbiol.">
        <title>The genome sequence of Desulfatibacillum alkenivorans AK-01: a blueprint for anaerobic alkane oxidation.</title>
        <authorList>
            <person name="Callaghan A.V."/>
            <person name="Morris B.E."/>
            <person name="Pereira I.A."/>
            <person name="McInerney M.J."/>
            <person name="Austin R.N."/>
            <person name="Groves J.T."/>
            <person name="Kukor J.J."/>
            <person name="Suflita J.M."/>
            <person name="Young L.Y."/>
            <person name="Zylstra G.J."/>
            <person name="Wawrik B."/>
        </authorList>
    </citation>
    <scope>NUCLEOTIDE SEQUENCE [LARGE SCALE GENOMIC DNA]</scope>
    <source>
        <strain>AK-01</strain>
    </source>
</reference>
<evidence type="ECO:0000255" key="1">
    <source>
        <dbReference type="HAMAP-Rule" id="MF_00107"/>
    </source>
</evidence>
<comment type="function">
    <text evidence="1">Involved in the biosynthesis of isopentenyl diphosphate (IPP) and dimethylallyl diphosphate (DMAPP), two major building blocks of isoprenoid compounds. Catalyzes the conversion of 4-diphosphocytidyl-2-C-methyl-D-erythritol 2-phosphate (CDP-ME2P) to 2-C-methyl-D-erythritol 2,4-cyclodiphosphate (ME-CPP) with a corresponding release of cytidine 5-monophosphate (CMP).</text>
</comment>
<comment type="catalytic activity">
    <reaction evidence="1">
        <text>4-CDP-2-C-methyl-D-erythritol 2-phosphate = 2-C-methyl-D-erythritol 2,4-cyclic diphosphate + CMP</text>
        <dbReference type="Rhea" id="RHEA:23864"/>
        <dbReference type="ChEBI" id="CHEBI:57919"/>
        <dbReference type="ChEBI" id="CHEBI:58483"/>
        <dbReference type="ChEBI" id="CHEBI:60377"/>
        <dbReference type="EC" id="4.6.1.12"/>
    </reaction>
</comment>
<comment type="cofactor">
    <cofactor evidence="1">
        <name>a divalent metal cation</name>
        <dbReference type="ChEBI" id="CHEBI:60240"/>
    </cofactor>
    <text evidence="1">Binds 1 divalent metal cation per subunit.</text>
</comment>
<comment type="pathway">
    <text evidence="1">Isoprenoid biosynthesis; isopentenyl diphosphate biosynthesis via DXP pathway; isopentenyl diphosphate from 1-deoxy-D-xylulose 5-phosphate: step 4/6.</text>
</comment>
<comment type="subunit">
    <text evidence="1">Homotrimer.</text>
</comment>
<comment type="similarity">
    <text evidence="1">Belongs to the IspF family.</text>
</comment>
<name>ISPF_DESAL</name>
<feature type="chain" id="PRO_1000117424" description="2-C-methyl-D-erythritol 2,4-cyclodiphosphate synthase">
    <location>
        <begin position="1"/>
        <end position="155"/>
    </location>
</feature>
<feature type="binding site" evidence="1">
    <location>
        <begin position="8"/>
        <end position="10"/>
    </location>
    <ligand>
        <name>4-CDP-2-C-methyl-D-erythritol 2-phosphate</name>
        <dbReference type="ChEBI" id="CHEBI:57919"/>
    </ligand>
</feature>
<feature type="binding site" evidence="1">
    <location>
        <position position="8"/>
    </location>
    <ligand>
        <name>a divalent metal cation</name>
        <dbReference type="ChEBI" id="CHEBI:60240"/>
    </ligand>
</feature>
<feature type="binding site" evidence="1">
    <location>
        <position position="10"/>
    </location>
    <ligand>
        <name>a divalent metal cation</name>
        <dbReference type="ChEBI" id="CHEBI:60240"/>
    </ligand>
</feature>
<feature type="binding site" evidence="1">
    <location>
        <begin position="34"/>
        <end position="35"/>
    </location>
    <ligand>
        <name>4-CDP-2-C-methyl-D-erythritol 2-phosphate</name>
        <dbReference type="ChEBI" id="CHEBI:57919"/>
    </ligand>
</feature>
<feature type="binding site" evidence="1">
    <location>
        <position position="42"/>
    </location>
    <ligand>
        <name>a divalent metal cation</name>
        <dbReference type="ChEBI" id="CHEBI:60240"/>
    </ligand>
</feature>
<feature type="binding site" evidence="1">
    <location>
        <begin position="56"/>
        <end position="58"/>
    </location>
    <ligand>
        <name>4-CDP-2-C-methyl-D-erythritol 2-phosphate</name>
        <dbReference type="ChEBI" id="CHEBI:57919"/>
    </ligand>
</feature>
<feature type="binding site" evidence="1">
    <location>
        <begin position="61"/>
        <end position="65"/>
    </location>
    <ligand>
        <name>4-CDP-2-C-methyl-D-erythritol 2-phosphate</name>
        <dbReference type="ChEBI" id="CHEBI:57919"/>
    </ligand>
</feature>
<feature type="binding site" evidence="1">
    <location>
        <begin position="132"/>
        <end position="135"/>
    </location>
    <ligand>
        <name>4-CDP-2-C-methyl-D-erythritol 2-phosphate</name>
        <dbReference type="ChEBI" id="CHEBI:57919"/>
    </ligand>
</feature>
<feature type="binding site" evidence="1">
    <location>
        <position position="142"/>
    </location>
    <ligand>
        <name>4-CDP-2-C-methyl-D-erythritol 2-phosphate</name>
        <dbReference type="ChEBI" id="CHEBI:57919"/>
    </ligand>
</feature>
<feature type="site" description="Transition state stabilizer" evidence="1">
    <location>
        <position position="34"/>
    </location>
</feature>
<feature type="site" description="Transition state stabilizer" evidence="1">
    <location>
        <position position="133"/>
    </location>
</feature>
<protein>
    <recommendedName>
        <fullName evidence="1">2-C-methyl-D-erythritol 2,4-cyclodiphosphate synthase</fullName>
        <shortName evidence="1">MECDP-synthase</shortName>
        <shortName evidence="1">MECPP-synthase</shortName>
        <shortName evidence="1">MECPS</shortName>
        <ecNumber evidence="1">4.6.1.12</ecNumber>
    </recommendedName>
</protein>
<organism>
    <name type="scientific">Desulfatibacillum aliphaticivorans</name>
    <dbReference type="NCBI Taxonomy" id="218208"/>
    <lineage>
        <taxon>Bacteria</taxon>
        <taxon>Pseudomonadati</taxon>
        <taxon>Thermodesulfobacteriota</taxon>
        <taxon>Desulfobacteria</taxon>
        <taxon>Desulfobacterales</taxon>
        <taxon>Desulfatibacillaceae</taxon>
        <taxon>Desulfatibacillum</taxon>
    </lineage>
</organism>
<accession>B8FHQ6</accession>